<dbReference type="EMBL" id="CP000499">
    <property type="protein sequence ID" value="ABN67201.2"/>
    <property type="molecule type" value="Genomic_DNA"/>
</dbReference>
<dbReference type="RefSeq" id="XP_001385230.2">
    <property type="nucleotide sequence ID" value="XM_001385193.1"/>
</dbReference>
<dbReference type="SMR" id="A3LVY7"/>
<dbReference type="FunCoup" id="A3LVY7">
    <property type="interactions" value="275"/>
</dbReference>
<dbReference type="STRING" id="322104.A3LVY7"/>
<dbReference type="GeneID" id="4839074"/>
<dbReference type="KEGG" id="pic:PICST_32290"/>
<dbReference type="eggNOG" id="ENOG502S2IS">
    <property type="taxonomic scope" value="Eukaryota"/>
</dbReference>
<dbReference type="HOGENOM" id="CLU_126135_0_0_1"/>
<dbReference type="InParanoid" id="A3LVY7"/>
<dbReference type="OMA" id="PKAYLHQ"/>
<dbReference type="OrthoDB" id="4068648at2759"/>
<dbReference type="Proteomes" id="UP000002258">
    <property type="component" value="Chromosome 5"/>
</dbReference>
<dbReference type="GO" id="GO:0030686">
    <property type="term" value="C:90S preribosome"/>
    <property type="evidence" value="ECO:0007669"/>
    <property type="project" value="InterPro"/>
</dbReference>
<dbReference type="GO" id="GO:0005730">
    <property type="term" value="C:nucleolus"/>
    <property type="evidence" value="ECO:0007669"/>
    <property type="project" value="UniProtKB-SubCell"/>
</dbReference>
<dbReference type="GO" id="GO:0030688">
    <property type="term" value="C:preribosome, small subunit precursor"/>
    <property type="evidence" value="ECO:0007669"/>
    <property type="project" value="InterPro"/>
</dbReference>
<dbReference type="GO" id="GO:0000462">
    <property type="term" value="P:maturation of SSU-rRNA from tricistronic rRNA transcript (SSU-rRNA, 5.8S rRNA, LSU-rRNA)"/>
    <property type="evidence" value="ECO:0007669"/>
    <property type="project" value="InterPro"/>
</dbReference>
<dbReference type="InterPro" id="IPR028160">
    <property type="entry name" value="Slx9-like"/>
</dbReference>
<dbReference type="Pfam" id="PF15341">
    <property type="entry name" value="SLX9"/>
    <property type="match status" value="1"/>
</dbReference>
<name>SLX9_PICST</name>
<proteinExistence type="inferred from homology"/>
<protein>
    <recommendedName>
        <fullName>Ribosome biogenesis protein SLX9</fullName>
    </recommendedName>
</protein>
<keyword id="KW-0539">Nucleus</keyword>
<keyword id="KW-1185">Reference proteome</keyword>
<keyword id="KW-0690">Ribosome biogenesis</keyword>
<keyword id="KW-0698">rRNA processing</keyword>
<accession>A3LVY7</accession>
<feature type="chain" id="PRO_0000333451" description="Ribosome biogenesis protein SLX9">
    <location>
        <begin position="1"/>
        <end position="194"/>
    </location>
</feature>
<feature type="region of interest" description="Disordered" evidence="2">
    <location>
        <begin position="1"/>
        <end position="45"/>
    </location>
</feature>
<organism>
    <name type="scientific">Scheffersomyces stipitis (strain ATCC 58785 / CBS 6054 / NBRC 10063 / NRRL Y-11545)</name>
    <name type="common">Yeast</name>
    <name type="synonym">Pichia stipitis</name>
    <dbReference type="NCBI Taxonomy" id="322104"/>
    <lineage>
        <taxon>Eukaryota</taxon>
        <taxon>Fungi</taxon>
        <taxon>Dikarya</taxon>
        <taxon>Ascomycota</taxon>
        <taxon>Saccharomycotina</taxon>
        <taxon>Pichiomycetes</taxon>
        <taxon>Debaryomycetaceae</taxon>
        <taxon>Scheffersomyces</taxon>
    </lineage>
</organism>
<evidence type="ECO:0000250" key="1"/>
<evidence type="ECO:0000256" key="2">
    <source>
        <dbReference type="SAM" id="MobiDB-lite"/>
    </source>
</evidence>
<evidence type="ECO:0000305" key="3"/>
<reference key="1">
    <citation type="journal article" date="2007" name="Nat. Biotechnol.">
        <title>Genome sequence of the lignocellulose-bioconverting and xylose-fermenting yeast Pichia stipitis.</title>
        <authorList>
            <person name="Jeffries T.W."/>
            <person name="Grigoriev I.V."/>
            <person name="Grimwood J."/>
            <person name="Laplaza J.M."/>
            <person name="Aerts A."/>
            <person name="Salamov A."/>
            <person name="Schmutz J."/>
            <person name="Lindquist E."/>
            <person name="Dehal P."/>
            <person name="Shapiro H."/>
            <person name="Jin Y.-S."/>
            <person name="Passoth V."/>
            <person name="Richardson P.M."/>
        </authorList>
    </citation>
    <scope>NUCLEOTIDE SEQUENCE [LARGE SCALE GENOMIC DNA]</scope>
    <source>
        <strain>ATCC 58785 / CBS 6054 / NBRC 10063 / NRRL Y-11545</strain>
    </source>
</reference>
<comment type="function">
    <text evidence="1">Involved in ribosome biogenesis. Required for normal pre-rRNA processing in internal transcribed spacer 1 (ITS1). May be involved in the movements of the replication forks (By similarity).</text>
</comment>
<comment type="subunit">
    <text evidence="1">Interacts with the 35S, 23S and 20S pre-rRNAs and with the U3 snoRNA.</text>
</comment>
<comment type="subcellular location">
    <subcellularLocation>
        <location evidence="1">Nucleus</location>
        <location evidence="1">Nucleolus</location>
    </subcellularLocation>
</comment>
<comment type="similarity">
    <text evidence="3">Belongs to the SLX9 family.</text>
</comment>
<sequence>MAGGIRKKTSLRDKSSRKSGLASKISEFKQQSTIENGQDEHFHENPLLKLSKISKKEKQQQKTDTFNQKLLHKVTFNTSSNISKSAVRRRKRKEKEQLKPKMDELLTSLPDDMFAPTAASTTTIRRATKTGEATSGYVKSTKANLNLPNANKATGHKQILKQENKNFTNVLKNPEFRQSPFSALKNAIKENLQG</sequence>
<gene>
    <name type="primary">SLX9</name>
    <name type="ORF">PICST_32290</name>
</gene>